<sequence>MASLVSGDKEAQISGDPGSKRGGWITFPFMLATLLGLSVTSFGWVMNLIVFLIEEFNIKSIAAAQISNVANGCLSMLPVVAAILADSFFGNIPVIAASSFISLLGIVLLTLIASLDYLRPRPCEAGSVLCTPPSKLHLGILYTALALVTTGAGGTRFTMASAGANQYEKPKEQGSFFNWYFLTLYAGAITGATAIVYIQDNASWKLGFGLCAAANLISFIVFVSGKRYYKHDKPMGSPFTSLIRVVVSATVKRKAVISCNEEDYHHYGLEKEVKTSAAMPSKSFRFLNRAALMTKDDLNQKEGSVNNIWRLCSVQEVEDFKAILRVFPLWLSIIFVSTPMVMQTSLIVLQALVTDRGLGPNFKVPAGSLQVIIIITACIVIIMNNWLVFPMYKKLTHKLLTPLQKVGIGQVLTILSMALSAVVEAKRLKTVENGHPMSVLWLFPPLVIVGIGEAFQFPANIELFYGEFPESLRNTATSLTSVVIGISFYLSTALIDLIQRTTAWLPNDINHGRVDNVYWLLVIGGILNFGYFLVCSWVYKYRNLKDNDQEQDPKDGTM</sequence>
<dbReference type="EMBL" id="AL157735">
    <property type="protein sequence ID" value="CAB75781.1"/>
    <property type="molecule type" value="Genomic_DNA"/>
</dbReference>
<dbReference type="EMBL" id="CP002686">
    <property type="protein sequence ID" value="AEE78059.1"/>
    <property type="molecule type" value="Genomic_DNA"/>
</dbReference>
<dbReference type="EMBL" id="AK117660">
    <property type="protein sequence ID" value="BAC42313.1"/>
    <property type="molecule type" value="mRNA"/>
</dbReference>
<dbReference type="PIR" id="T47508">
    <property type="entry name" value="T47508"/>
</dbReference>
<dbReference type="RefSeq" id="NP_190154.1">
    <property type="nucleotide sequence ID" value="NM_114437.5"/>
</dbReference>
<dbReference type="SMR" id="Q9M175"/>
<dbReference type="FunCoup" id="Q9M175">
    <property type="interactions" value="1"/>
</dbReference>
<dbReference type="STRING" id="3702.Q9M175"/>
<dbReference type="PaxDb" id="3702-AT3G45680.1"/>
<dbReference type="ProteomicsDB" id="226238"/>
<dbReference type="EnsemblPlants" id="AT3G45680.1">
    <property type="protein sequence ID" value="AT3G45680.1"/>
    <property type="gene ID" value="AT3G45680"/>
</dbReference>
<dbReference type="GeneID" id="823710"/>
<dbReference type="Gramene" id="AT3G45680.1">
    <property type="protein sequence ID" value="AT3G45680.1"/>
    <property type="gene ID" value="AT3G45680"/>
</dbReference>
<dbReference type="KEGG" id="ath:AT3G45680"/>
<dbReference type="Araport" id="AT3G45680"/>
<dbReference type="TAIR" id="AT3G45680">
    <property type="gene designation" value="NPF2.3"/>
</dbReference>
<dbReference type="eggNOG" id="KOG1237">
    <property type="taxonomic scope" value="Eukaryota"/>
</dbReference>
<dbReference type="HOGENOM" id="CLU_009313_4_2_1"/>
<dbReference type="InParanoid" id="Q9M175"/>
<dbReference type="OMA" id="QVVIMIS"/>
<dbReference type="OrthoDB" id="8904098at2759"/>
<dbReference type="PhylomeDB" id="Q9M175"/>
<dbReference type="PRO" id="PR:Q9M175"/>
<dbReference type="Proteomes" id="UP000006548">
    <property type="component" value="Chromosome 3"/>
</dbReference>
<dbReference type="ExpressionAtlas" id="Q9M175">
    <property type="expression patterns" value="baseline and differential"/>
</dbReference>
<dbReference type="GO" id="GO:0005886">
    <property type="term" value="C:plasma membrane"/>
    <property type="evidence" value="ECO:0000314"/>
    <property type="project" value="TAIR"/>
</dbReference>
<dbReference type="GO" id="GO:0015112">
    <property type="term" value="F:nitrate transmembrane transporter activity"/>
    <property type="evidence" value="ECO:0000314"/>
    <property type="project" value="TAIR"/>
</dbReference>
<dbReference type="GO" id="GO:0071472">
    <property type="term" value="P:cellular response to salt stress"/>
    <property type="evidence" value="ECO:0000315"/>
    <property type="project" value="TAIR"/>
</dbReference>
<dbReference type="GO" id="GO:0042128">
    <property type="term" value="P:nitrate assimilation"/>
    <property type="evidence" value="ECO:0007669"/>
    <property type="project" value="UniProtKB-KW"/>
</dbReference>
<dbReference type="GO" id="GO:0015706">
    <property type="term" value="P:nitrate transmembrane transport"/>
    <property type="evidence" value="ECO:0000315"/>
    <property type="project" value="TAIR"/>
</dbReference>
<dbReference type="GO" id="GO:0006857">
    <property type="term" value="P:oligopeptide transport"/>
    <property type="evidence" value="ECO:0007669"/>
    <property type="project" value="InterPro"/>
</dbReference>
<dbReference type="GO" id="GO:0009624">
    <property type="term" value="P:response to nematode"/>
    <property type="evidence" value="ECO:0007007"/>
    <property type="project" value="TAIR"/>
</dbReference>
<dbReference type="CDD" id="cd17416">
    <property type="entry name" value="MFS_NPF1_2"/>
    <property type="match status" value="1"/>
</dbReference>
<dbReference type="Gene3D" id="1.20.1250.20">
    <property type="entry name" value="MFS general substrate transporter like domains"/>
    <property type="match status" value="1"/>
</dbReference>
<dbReference type="InterPro" id="IPR036259">
    <property type="entry name" value="MFS_trans_sf"/>
</dbReference>
<dbReference type="InterPro" id="IPR000109">
    <property type="entry name" value="POT_fam"/>
</dbReference>
<dbReference type="InterPro" id="IPR018456">
    <property type="entry name" value="PTR2_symporter_CS"/>
</dbReference>
<dbReference type="PANTHER" id="PTHR11654">
    <property type="entry name" value="OLIGOPEPTIDE TRANSPORTER-RELATED"/>
    <property type="match status" value="1"/>
</dbReference>
<dbReference type="Pfam" id="PF00854">
    <property type="entry name" value="PTR2"/>
    <property type="match status" value="1"/>
</dbReference>
<dbReference type="SUPFAM" id="SSF103473">
    <property type="entry name" value="MFS general substrate transporter"/>
    <property type="match status" value="1"/>
</dbReference>
<dbReference type="PROSITE" id="PS01022">
    <property type="entry name" value="PTR2_1"/>
    <property type="match status" value="1"/>
</dbReference>
<reference key="1">
    <citation type="journal article" date="2000" name="Nature">
        <title>Sequence and analysis of chromosome 3 of the plant Arabidopsis thaliana.</title>
        <authorList>
            <person name="Salanoubat M."/>
            <person name="Lemcke K."/>
            <person name="Rieger M."/>
            <person name="Ansorge W."/>
            <person name="Unseld M."/>
            <person name="Fartmann B."/>
            <person name="Valle G."/>
            <person name="Bloecker H."/>
            <person name="Perez-Alonso M."/>
            <person name="Obermaier B."/>
            <person name="Delseny M."/>
            <person name="Boutry M."/>
            <person name="Grivell L.A."/>
            <person name="Mache R."/>
            <person name="Puigdomenech P."/>
            <person name="De Simone V."/>
            <person name="Choisne N."/>
            <person name="Artiguenave F."/>
            <person name="Robert C."/>
            <person name="Brottier P."/>
            <person name="Wincker P."/>
            <person name="Cattolico L."/>
            <person name="Weissenbach J."/>
            <person name="Saurin W."/>
            <person name="Quetier F."/>
            <person name="Schaefer M."/>
            <person name="Mueller-Auer S."/>
            <person name="Gabel C."/>
            <person name="Fuchs M."/>
            <person name="Benes V."/>
            <person name="Wurmbach E."/>
            <person name="Drzonek H."/>
            <person name="Erfle H."/>
            <person name="Jordan N."/>
            <person name="Bangert S."/>
            <person name="Wiedelmann R."/>
            <person name="Kranz H."/>
            <person name="Voss H."/>
            <person name="Holland R."/>
            <person name="Brandt P."/>
            <person name="Nyakatura G."/>
            <person name="Vezzi A."/>
            <person name="D'Angelo M."/>
            <person name="Pallavicini A."/>
            <person name="Toppo S."/>
            <person name="Simionati B."/>
            <person name="Conrad A."/>
            <person name="Hornischer K."/>
            <person name="Kauer G."/>
            <person name="Loehnert T.-H."/>
            <person name="Nordsiek G."/>
            <person name="Reichelt J."/>
            <person name="Scharfe M."/>
            <person name="Schoen O."/>
            <person name="Bargues M."/>
            <person name="Terol J."/>
            <person name="Climent J."/>
            <person name="Navarro P."/>
            <person name="Collado C."/>
            <person name="Perez-Perez A."/>
            <person name="Ottenwaelder B."/>
            <person name="Duchemin D."/>
            <person name="Cooke R."/>
            <person name="Laudie M."/>
            <person name="Berger-Llauro C."/>
            <person name="Purnelle B."/>
            <person name="Masuy D."/>
            <person name="de Haan M."/>
            <person name="Maarse A.C."/>
            <person name="Alcaraz J.-P."/>
            <person name="Cottet A."/>
            <person name="Casacuberta E."/>
            <person name="Monfort A."/>
            <person name="Argiriou A."/>
            <person name="Flores M."/>
            <person name="Liguori R."/>
            <person name="Vitale D."/>
            <person name="Mannhaupt G."/>
            <person name="Haase D."/>
            <person name="Schoof H."/>
            <person name="Rudd S."/>
            <person name="Zaccaria P."/>
            <person name="Mewes H.-W."/>
            <person name="Mayer K.F.X."/>
            <person name="Kaul S."/>
            <person name="Town C.D."/>
            <person name="Koo H.L."/>
            <person name="Tallon L.J."/>
            <person name="Jenkins J."/>
            <person name="Rooney T."/>
            <person name="Rizzo M."/>
            <person name="Walts A."/>
            <person name="Utterback T."/>
            <person name="Fujii C.Y."/>
            <person name="Shea T.P."/>
            <person name="Creasy T.H."/>
            <person name="Haas B."/>
            <person name="Maiti R."/>
            <person name="Wu D."/>
            <person name="Peterson J."/>
            <person name="Van Aken S."/>
            <person name="Pai G."/>
            <person name="Militscher J."/>
            <person name="Sellers P."/>
            <person name="Gill J.E."/>
            <person name="Feldblyum T.V."/>
            <person name="Preuss D."/>
            <person name="Lin X."/>
            <person name="Nierman W.C."/>
            <person name="Salzberg S.L."/>
            <person name="White O."/>
            <person name="Venter J.C."/>
            <person name="Fraser C.M."/>
            <person name="Kaneko T."/>
            <person name="Nakamura Y."/>
            <person name="Sato S."/>
            <person name="Kato T."/>
            <person name="Asamizu E."/>
            <person name="Sasamoto S."/>
            <person name="Kimura T."/>
            <person name="Idesawa K."/>
            <person name="Kawashima K."/>
            <person name="Kishida Y."/>
            <person name="Kiyokawa C."/>
            <person name="Kohara M."/>
            <person name="Matsumoto M."/>
            <person name="Matsuno A."/>
            <person name="Muraki A."/>
            <person name="Nakayama S."/>
            <person name="Nakazaki N."/>
            <person name="Shinpo S."/>
            <person name="Takeuchi C."/>
            <person name="Wada T."/>
            <person name="Watanabe A."/>
            <person name="Yamada M."/>
            <person name="Yasuda M."/>
            <person name="Tabata S."/>
        </authorList>
    </citation>
    <scope>NUCLEOTIDE SEQUENCE [LARGE SCALE GENOMIC DNA]</scope>
    <source>
        <strain>cv. Columbia</strain>
    </source>
</reference>
<reference key="2">
    <citation type="journal article" date="2017" name="Plant J.">
        <title>Araport11: a complete reannotation of the Arabidopsis thaliana reference genome.</title>
        <authorList>
            <person name="Cheng C.Y."/>
            <person name="Krishnakumar V."/>
            <person name="Chan A.P."/>
            <person name="Thibaud-Nissen F."/>
            <person name="Schobel S."/>
            <person name="Town C.D."/>
        </authorList>
    </citation>
    <scope>GENOME REANNOTATION</scope>
    <source>
        <strain>cv. Columbia</strain>
    </source>
</reference>
<reference key="3">
    <citation type="journal article" date="2002" name="Science">
        <title>Functional annotation of a full-length Arabidopsis cDNA collection.</title>
        <authorList>
            <person name="Seki M."/>
            <person name="Narusaka M."/>
            <person name="Kamiya A."/>
            <person name="Ishida J."/>
            <person name="Satou M."/>
            <person name="Sakurai T."/>
            <person name="Nakajima M."/>
            <person name="Enju A."/>
            <person name="Akiyama K."/>
            <person name="Oono Y."/>
            <person name="Muramatsu M."/>
            <person name="Hayashizaki Y."/>
            <person name="Kawai J."/>
            <person name="Carninci P."/>
            <person name="Itoh M."/>
            <person name="Ishii Y."/>
            <person name="Arakawa T."/>
            <person name="Shibata K."/>
            <person name="Shinagawa A."/>
            <person name="Shinozaki K."/>
        </authorList>
    </citation>
    <scope>NUCLEOTIDE SEQUENCE [LARGE SCALE MRNA]</scope>
    <source>
        <strain>cv. Columbia</strain>
    </source>
</reference>
<reference key="4">
    <citation type="journal article" date="2005" name="Mol. Plant Microbe Interact.">
        <title>Nematode-induced changes of transporter gene expression in Arabidopsis roots.</title>
        <authorList>
            <person name="Hammes U.Z."/>
            <person name="Schachtman D.P."/>
            <person name="Berg R.H."/>
            <person name="Nielsen E."/>
            <person name="Koch W."/>
            <person name="McIntyre L.M."/>
            <person name="Taylor C.G."/>
        </authorList>
    </citation>
    <scope>INDUCTION BY NEMATODES</scope>
</reference>
<reference key="5">
    <citation type="journal article" date="2007" name="FEBS Lett.">
        <title>Nitrate transporters and peptide transporters.</title>
        <authorList>
            <person name="Tsay Y.F."/>
            <person name="Chiu C.C."/>
            <person name="Tsai C.B."/>
            <person name="Ho C.H."/>
            <person name="Hsu P.K."/>
        </authorList>
    </citation>
    <scope>TISSUE SPECIFICITY</scope>
    <scope>GENE FAMILY</scope>
</reference>
<reference key="6">
    <citation type="journal article" date="2007" name="Plant Cell">
        <title>Nitrate efflux at the root plasma membrane: identification of an Arabidopsis excretion transporter.</title>
        <authorList>
            <person name="Segonzac C."/>
            <person name="Boyer J.C."/>
            <person name="Ipotesi E."/>
            <person name="Szponarski W."/>
            <person name="Tillard P."/>
            <person name="Touraine B."/>
            <person name="Sommerer N."/>
            <person name="Rossignol M."/>
            <person name="Gibrat R."/>
        </authorList>
    </citation>
    <scope>IDENTIFICATION</scope>
    <scope>TISSUE SPECIFICITY</scope>
</reference>
<reference key="7">
    <citation type="journal article" date="2010" name="Plant Cell">
        <title>The Arabidopsis nitrate transporter NRT1.8 functions in nitrate removal from the xylem sap and mediates cadmium tolerance.</title>
        <authorList>
            <person name="Li J.Y."/>
            <person name="Fu Y.L."/>
            <person name="Pike S.M."/>
            <person name="Bao J."/>
            <person name="Tian W."/>
            <person name="Zhang Y."/>
            <person name="Chen C.Z."/>
            <person name="Zhang Y."/>
            <person name="Li H.M."/>
            <person name="Huang J."/>
            <person name="Li L.G."/>
            <person name="Schroeder J.I."/>
            <person name="Gassmann W."/>
            <person name="Gong J.M."/>
        </authorList>
    </citation>
    <scope>GENE FAMILY</scope>
</reference>
<reference key="8">
    <citation type="journal article" date="2014" name="Trends Plant Sci.">
        <title>A unified nomenclature of NITRATE TRANSPORTER 1/PEPTIDE TRANSPORTER family members in plants.</title>
        <authorList>
            <person name="Leran S."/>
            <person name="Varala K."/>
            <person name="Boyer J.C."/>
            <person name="Chiurazzi M."/>
            <person name="Crawford N."/>
            <person name="Daniel-Vedele F."/>
            <person name="David L."/>
            <person name="Dickstein R."/>
            <person name="Fernandez E."/>
            <person name="Forde B."/>
            <person name="Gassmann W."/>
            <person name="Geiger D."/>
            <person name="Gojon A."/>
            <person name="Gong J.M."/>
            <person name="Halkier B.A."/>
            <person name="Harris J.M."/>
            <person name="Hedrich R."/>
            <person name="Limami A.M."/>
            <person name="Rentsch D."/>
            <person name="Seo M."/>
            <person name="Tsay Y.F."/>
            <person name="Zhang M."/>
            <person name="Coruzzi G."/>
            <person name="Lacombe B."/>
        </authorList>
    </citation>
    <scope>GENE FAMILY</scope>
    <scope>NOMENCLATURE</scope>
</reference>
<keyword id="KW-0472">Membrane</keyword>
<keyword id="KW-0534">Nitrate assimilation</keyword>
<keyword id="KW-1185">Reference proteome</keyword>
<keyword id="KW-0812">Transmembrane</keyword>
<keyword id="KW-1133">Transmembrane helix</keyword>
<keyword id="KW-0813">Transport</keyword>
<accession>Q9M175</accession>
<accession>Q8GYF8</accession>
<evidence type="ECO:0000250" key="1"/>
<evidence type="ECO:0000255" key="2"/>
<evidence type="ECO:0000269" key="3">
    <source>
    </source>
</evidence>
<evidence type="ECO:0000269" key="4">
    <source>
    </source>
</evidence>
<evidence type="ECO:0000269" key="5">
    <source>
    </source>
</evidence>
<evidence type="ECO:0000305" key="6"/>
<proteinExistence type="evidence at transcript level"/>
<protein>
    <recommendedName>
        <fullName>Protein NRT1/ PTR FAMILY 2.3</fullName>
        <shortName>AtNPF2.3</shortName>
    </recommendedName>
    <alternativeName>
        <fullName>Probable nitrate excretion transporter 3</fullName>
    </alternativeName>
    <alternativeName>
        <fullName>Protein NAXT1-like 2</fullName>
    </alternativeName>
</protein>
<comment type="function">
    <text evidence="1">Transporter involved in a passive nitrate efflux.</text>
</comment>
<comment type="subcellular location">
    <subcellularLocation>
        <location evidence="1">Membrane</location>
        <topology evidence="1">Multi-pass membrane protein</topology>
    </subcellularLocation>
</comment>
<comment type="tissue specificity">
    <text evidence="4 5">Expressed in flowers, siliques and root epidermis or cortex. Detected in shoots.</text>
</comment>
<comment type="induction">
    <text evidence="3">Up-regulated upon nematode infection.</text>
</comment>
<comment type="similarity">
    <text evidence="6">Belongs to the major facilitator superfamily. Proton-dependent oligopeptide transporter (POT/PTR) (TC 2.A.17) family.</text>
</comment>
<organism>
    <name type="scientific">Arabidopsis thaliana</name>
    <name type="common">Mouse-ear cress</name>
    <dbReference type="NCBI Taxonomy" id="3702"/>
    <lineage>
        <taxon>Eukaryota</taxon>
        <taxon>Viridiplantae</taxon>
        <taxon>Streptophyta</taxon>
        <taxon>Embryophyta</taxon>
        <taxon>Tracheophyta</taxon>
        <taxon>Spermatophyta</taxon>
        <taxon>Magnoliopsida</taxon>
        <taxon>eudicotyledons</taxon>
        <taxon>Gunneridae</taxon>
        <taxon>Pentapetalae</taxon>
        <taxon>rosids</taxon>
        <taxon>malvids</taxon>
        <taxon>Brassicales</taxon>
        <taxon>Brassicaceae</taxon>
        <taxon>Camelineae</taxon>
        <taxon>Arabidopsis</taxon>
    </lineage>
</organism>
<name>PTR39_ARATH</name>
<feature type="chain" id="PRO_0000399973" description="Protein NRT1/ PTR FAMILY 2.3">
    <location>
        <begin position="1"/>
        <end position="558"/>
    </location>
</feature>
<feature type="transmembrane region" description="Helical" evidence="2">
    <location>
        <begin position="33"/>
        <end position="53"/>
    </location>
</feature>
<feature type="transmembrane region" description="Helical" evidence="2">
    <location>
        <begin position="69"/>
        <end position="89"/>
    </location>
</feature>
<feature type="transmembrane region" description="Helical" evidence="2">
    <location>
        <begin position="92"/>
        <end position="112"/>
    </location>
</feature>
<feature type="transmembrane region" description="Helical" evidence="2">
    <location>
        <begin position="128"/>
        <end position="148"/>
    </location>
</feature>
<feature type="transmembrane region" description="Helical" evidence="2">
    <location>
        <begin position="176"/>
        <end position="196"/>
    </location>
</feature>
<feature type="transmembrane region" description="Helical" evidence="2">
    <location>
        <begin position="203"/>
        <end position="223"/>
    </location>
</feature>
<feature type="transmembrane region" description="Helical" evidence="2">
    <location>
        <begin position="329"/>
        <end position="349"/>
    </location>
</feature>
<feature type="transmembrane region" description="Helical" evidence="2">
    <location>
        <begin position="371"/>
        <end position="391"/>
    </location>
</feature>
<feature type="transmembrane region" description="Helical" evidence="2">
    <location>
        <begin position="403"/>
        <end position="423"/>
    </location>
</feature>
<feature type="transmembrane region" description="Helical" evidence="2">
    <location>
        <begin position="439"/>
        <end position="459"/>
    </location>
</feature>
<feature type="transmembrane region" description="Helical" evidence="2">
    <location>
        <begin position="478"/>
        <end position="498"/>
    </location>
</feature>
<feature type="transmembrane region" description="Helical" evidence="2">
    <location>
        <begin position="517"/>
        <end position="537"/>
    </location>
</feature>
<feature type="sequence conflict" description="In Ref. 3; BAC42313." evidence="6" ref="3">
    <original>M</original>
    <variation>V</variation>
    <location>
        <position position="76"/>
    </location>
</feature>
<gene>
    <name type="primary">NPF2.3</name>
    <name type="ordered locus">At3g45680</name>
    <name type="ORF">T6D9.10</name>
</gene>